<name>RL22_NITOC</name>
<dbReference type="EMBL" id="CP000127">
    <property type="protein sequence ID" value="ABA58777.1"/>
    <property type="molecule type" value="Genomic_DNA"/>
</dbReference>
<dbReference type="RefSeq" id="WP_011330925.1">
    <property type="nucleotide sequence ID" value="NC_007484.1"/>
</dbReference>
<dbReference type="SMR" id="Q3J8R9"/>
<dbReference type="FunCoup" id="Q3J8R9">
    <property type="interactions" value="579"/>
</dbReference>
<dbReference type="STRING" id="323261.Noc_2319"/>
<dbReference type="KEGG" id="noc:Noc_2319"/>
<dbReference type="eggNOG" id="COG0091">
    <property type="taxonomic scope" value="Bacteria"/>
</dbReference>
<dbReference type="HOGENOM" id="CLU_083987_3_3_6"/>
<dbReference type="InParanoid" id="Q3J8R9"/>
<dbReference type="Proteomes" id="UP000006838">
    <property type="component" value="Chromosome"/>
</dbReference>
<dbReference type="GO" id="GO:0022625">
    <property type="term" value="C:cytosolic large ribosomal subunit"/>
    <property type="evidence" value="ECO:0007669"/>
    <property type="project" value="TreeGrafter"/>
</dbReference>
<dbReference type="GO" id="GO:0019843">
    <property type="term" value="F:rRNA binding"/>
    <property type="evidence" value="ECO:0007669"/>
    <property type="project" value="UniProtKB-UniRule"/>
</dbReference>
<dbReference type="GO" id="GO:0003735">
    <property type="term" value="F:structural constituent of ribosome"/>
    <property type="evidence" value="ECO:0007669"/>
    <property type="project" value="InterPro"/>
</dbReference>
<dbReference type="GO" id="GO:0006412">
    <property type="term" value="P:translation"/>
    <property type="evidence" value="ECO:0007669"/>
    <property type="project" value="UniProtKB-UniRule"/>
</dbReference>
<dbReference type="CDD" id="cd00336">
    <property type="entry name" value="Ribosomal_L22"/>
    <property type="match status" value="1"/>
</dbReference>
<dbReference type="FunFam" id="3.90.470.10:FF:000001">
    <property type="entry name" value="50S ribosomal protein L22"/>
    <property type="match status" value="1"/>
</dbReference>
<dbReference type="Gene3D" id="3.90.470.10">
    <property type="entry name" value="Ribosomal protein L22/L17"/>
    <property type="match status" value="1"/>
</dbReference>
<dbReference type="HAMAP" id="MF_01331_B">
    <property type="entry name" value="Ribosomal_uL22_B"/>
    <property type="match status" value="1"/>
</dbReference>
<dbReference type="InterPro" id="IPR001063">
    <property type="entry name" value="Ribosomal_uL22"/>
</dbReference>
<dbReference type="InterPro" id="IPR005727">
    <property type="entry name" value="Ribosomal_uL22_bac/chlpt-type"/>
</dbReference>
<dbReference type="InterPro" id="IPR047867">
    <property type="entry name" value="Ribosomal_uL22_bac/org-type"/>
</dbReference>
<dbReference type="InterPro" id="IPR018260">
    <property type="entry name" value="Ribosomal_uL22_CS"/>
</dbReference>
<dbReference type="InterPro" id="IPR036394">
    <property type="entry name" value="Ribosomal_uL22_sf"/>
</dbReference>
<dbReference type="NCBIfam" id="TIGR01044">
    <property type="entry name" value="rplV_bact"/>
    <property type="match status" value="1"/>
</dbReference>
<dbReference type="PANTHER" id="PTHR13501">
    <property type="entry name" value="CHLOROPLAST 50S RIBOSOMAL PROTEIN L22-RELATED"/>
    <property type="match status" value="1"/>
</dbReference>
<dbReference type="PANTHER" id="PTHR13501:SF8">
    <property type="entry name" value="LARGE RIBOSOMAL SUBUNIT PROTEIN UL22M"/>
    <property type="match status" value="1"/>
</dbReference>
<dbReference type="Pfam" id="PF00237">
    <property type="entry name" value="Ribosomal_L22"/>
    <property type="match status" value="1"/>
</dbReference>
<dbReference type="SUPFAM" id="SSF54843">
    <property type="entry name" value="Ribosomal protein L22"/>
    <property type="match status" value="1"/>
</dbReference>
<dbReference type="PROSITE" id="PS00464">
    <property type="entry name" value="RIBOSOMAL_L22"/>
    <property type="match status" value="1"/>
</dbReference>
<protein>
    <recommendedName>
        <fullName evidence="1">Large ribosomal subunit protein uL22</fullName>
    </recommendedName>
    <alternativeName>
        <fullName evidence="2">50S ribosomal protein L22</fullName>
    </alternativeName>
</protein>
<feature type="chain" id="PRO_0000243176" description="Large ribosomal subunit protein uL22">
    <location>
        <begin position="1"/>
        <end position="110"/>
    </location>
</feature>
<reference key="1">
    <citation type="journal article" date="2006" name="Appl. Environ. Microbiol.">
        <title>Complete genome sequence of the marine, chemolithoautotrophic, ammonia-oxidizing bacterium Nitrosococcus oceani ATCC 19707.</title>
        <authorList>
            <person name="Klotz M.G."/>
            <person name="Arp D.J."/>
            <person name="Chain P.S.G."/>
            <person name="El-Sheikh A.F."/>
            <person name="Hauser L.J."/>
            <person name="Hommes N.G."/>
            <person name="Larimer F.W."/>
            <person name="Malfatti S.A."/>
            <person name="Norton J.M."/>
            <person name="Poret-Peterson A.T."/>
            <person name="Vergez L.M."/>
            <person name="Ward B.B."/>
        </authorList>
    </citation>
    <scope>NUCLEOTIDE SEQUENCE [LARGE SCALE GENOMIC DNA]</scope>
    <source>
        <strain>ATCC 19707 / BCRC 17464 / JCM 30415 / NCIMB 11848 / C-107</strain>
    </source>
</reference>
<gene>
    <name evidence="1" type="primary">rplV</name>
    <name type="ordered locus">Noc_2319</name>
</gene>
<comment type="function">
    <text evidence="1">This protein binds specifically to 23S rRNA; its binding is stimulated by other ribosomal proteins, e.g. L4, L17, and L20. It is important during the early stages of 50S assembly. It makes multiple contacts with different domains of the 23S rRNA in the assembled 50S subunit and ribosome (By similarity).</text>
</comment>
<comment type="function">
    <text evidence="1">The globular domain of the protein is located near the polypeptide exit tunnel on the outside of the subunit, while an extended beta-hairpin is found that lines the wall of the exit tunnel in the center of the 70S ribosome.</text>
</comment>
<comment type="subunit">
    <text evidence="1">Part of the 50S ribosomal subunit.</text>
</comment>
<comment type="similarity">
    <text evidence="1">Belongs to the universal ribosomal protein uL22 family.</text>
</comment>
<sequence length="110" mass="11959">MATTAILKNARLSAQKGRLVADQVRGLPVDKALDILGFSPKKASALIRKVLESAIANAEHNDGADIDELRVAAIMVNEGPTIKRIRARARGRASRVFKRSCHIKVMVSED</sequence>
<keyword id="KW-1185">Reference proteome</keyword>
<keyword id="KW-0687">Ribonucleoprotein</keyword>
<keyword id="KW-0689">Ribosomal protein</keyword>
<keyword id="KW-0694">RNA-binding</keyword>
<keyword id="KW-0699">rRNA-binding</keyword>
<accession>Q3J8R9</accession>
<proteinExistence type="inferred from homology"/>
<organism>
    <name type="scientific">Nitrosococcus oceani (strain ATCC 19707 / BCRC 17464 / JCM 30415 / NCIMB 11848 / C-107)</name>
    <dbReference type="NCBI Taxonomy" id="323261"/>
    <lineage>
        <taxon>Bacteria</taxon>
        <taxon>Pseudomonadati</taxon>
        <taxon>Pseudomonadota</taxon>
        <taxon>Gammaproteobacteria</taxon>
        <taxon>Chromatiales</taxon>
        <taxon>Chromatiaceae</taxon>
        <taxon>Nitrosococcus</taxon>
    </lineage>
</organism>
<evidence type="ECO:0000255" key="1">
    <source>
        <dbReference type="HAMAP-Rule" id="MF_01331"/>
    </source>
</evidence>
<evidence type="ECO:0000305" key="2"/>